<keyword id="KW-0131">Cell cycle</keyword>
<keyword id="KW-0132">Cell division</keyword>
<keyword id="KW-0342">GTP-binding</keyword>
<keyword id="KW-0460">Magnesium</keyword>
<keyword id="KW-0479">Metal-binding</keyword>
<keyword id="KW-0547">Nucleotide-binding</keyword>
<keyword id="KW-0717">Septation</keyword>
<gene>
    <name evidence="1" type="primary">engB</name>
    <name type="ordered locus">BCB4264_A4587</name>
</gene>
<comment type="function">
    <text evidence="1">Necessary for normal cell division and for the maintenance of normal septation.</text>
</comment>
<comment type="cofactor">
    <cofactor evidence="1">
        <name>Mg(2+)</name>
        <dbReference type="ChEBI" id="CHEBI:18420"/>
    </cofactor>
</comment>
<comment type="similarity">
    <text evidence="1">Belongs to the TRAFAC class TrmE-Era-EngA-EngB-Septin-like GTPase superfamily. EngB GTPase family.</text>
</comment>
<sequence>MKVTKADIVISAVKPEQYPDSDLPEIALAGRSNVGKSSFINKILNRKKLVRISSKPGKTQTLNFFLINEMMHFVDVPGYGYAKVSKSERAAWGKMIETYFTTREQLDAAVLVVDLRHQPTSDDVMMYDFLKHYEIPTIIIATKADKIPKGKWQKHLKVVKETLAVEIGDEIVLFSSETGLGKEEAWKAIHKFTKTKNA</sequence>
<reference key="1">
    <citation type="submission" date="2008-10" db="EMBL/GenBank/DDBJ databases">
        <title>Genome sequence of Bacillus cereus B4264.</title>
        <authorList>
            <person name="Dodson R.J."/>
            <person name="Durkin A.S."/>
            <person name="Rosovitz M.J."/>
            <person name="Rasko D.A."/>
            <person name="Hoffmaster A."/>
            <person name="Ravel J."/>
            <person name="Sutton G."/>
        </authorList>
    </citation>
    <scope>NUCLEOTIDE SEQUENCE [LARGE SCALE GENOMIC DNA]</scope>
    <source>
        <strain>B4264</strain>
    </source>
</reference>
<proteinExistence type="inferred from homology"/>
<accession>B7HEA1</accession>
<protein>
    <recommendedName>
        <fullName evidence="1">Probable GTP-binding protein EngB</fullName>
    </recommendedName>
</protein>
<name>ENGB_BACC4</name>
<evidence type="ECO:0000255" key="1">
    <source>
        <dbReference type="HAMAP-Rule" id="MF_00321"/>
    </source>
</evidence>
<feature type="chain" id="PRO_1000119591" description="Probable GTP-binding protein EngB">
    <location>
        <begin position="1"/>
        <end position="198"/>
    </location>
</feature>
<feature type="domain" description="EngB-type G" evidence="1">
    <location>
        <begin position="22"/>
        <end position="195"/>
    </location>
</feature>
<feature type="binding site" evidence="1">
    <location>
        <begin position="30"/>
        <end position="37"/>
    </location>
    <ligand>
        <name>GTP</name>
        <dbReference type="ChEBI" id="CHEBI:37565"/>
    </ligand>
</feature>
<feature type="binding site" evidence="1">
    <location>
        <position position="37"/>
    </location>
    <ligand>
        <name>Mg(2+)</name>
        <dbReference type="ChEBI" id="CHEBI:18420"/>
    </ligand>
</feature>
<feature type="binding site" evidence="1">
    <location>
        <begin position="57"/>
        <end position="61"/>
    </location>
    <ligand>
        <name>GTP</name>
        <dbReference type="ChEBI" id="CHEBI:37565"/>
    </ligand>
</feature>
<feature type="binding site" evidence="1">
    <location>
        <position position="59"/>
    </location>
    <ligand>
        <name>Mg(2+)</name>
        <dbReference type="ChEBI" id="CHEBI:18420"/>
    </ligand>
</feature>
<feature type="binding site" evidence="1">
    <location>
        <begin position="75"/>
        <end position="78"/>
    </location>
    <ligand>
        <name>GTP</name>
        <dbReference type="ChEBI" id="CHEBI:37565"/>
    </ligand>
</feature>
<feature type="binding site" evidence="1">
    <location>
        <begin position="142"/>
        <end position="145"/>
    </location>
    <ligand>
        <name>GTP</name>
        <dbReference type="ChEBI" id="CHEBI:37565"/>
    </ligand>
</feature>
<feature type="binding site" evidence="1">
    <location>
        <begin position="174"/>
        <end position="176"/>
    </location>
    <ligand>
        <name>GTP</name>
        <dbReference type="ChEBI" id="CHEBI:37565"/>
    </ligand>
</feature>
<organism>
    <name type="scientific">Bacillus cereus (strain B4264)</name>
    <dbReference type="NCBI Taxonomy" id="405532"/>
    <lineage>
        <taxon>Bacteria</taxon>
        <taxon>Bacillati</taxon>
        <taxon>Bacillota</taxon>
        <taxon>Bacilli</taxon>
        <taxon>Bacillales</taxon>
        <taxon>Bacillaceae</taxon>
        <taxon>Bacillus</taxon>
        <taxon>Bacillus cereus group</taxon>
    </lineage>
</organism>
<dbReference type="EMBL" id="CP001176">
    <property type="protein sequence ID" value="ACK60461.1"/>
    <property type="molecule type" value="Genomic_DNA"/>
</dbReference>
<dbReference type="SMR" id="B7HEA1"/>
<dbReference type="KEGG" id="bcb:BCB4264_A4587"/>
<dbReference type="HOGENOM" id="CLU_033732_3_0_9"/>
<dbReference type="Proteomes" id="UP000007096">
    <property type="component" value="Chromosome"/>
</dbReference>
<dbReference type="GO" id="GO:0005829">
    <property type="term" value="C:cytosol"/>
    <property type="evidence" value="ECO:0007669"/>
    <property type="project" value="TreeGrafter"/>
</dbReference>
<dbReference type="GO" id="GO:0005525">
    <property type="term" value="F:GTP binding"/>
    <property type="evidence" value="ECO:0007669"/>
    <property type="project" value="UniProtKB-UniRule"/>
</dbReference>
<dbReference type="GO" id="GO:0046872">
    <property type="term" value="F:metal ion binding"/>
    <property type="evidence" value="ECO:0007669"/>
    <property type="project" value="UniProtKB-KW"/>
</dbReference>
<dbReference type="GO" id="GO:0000917">
    <property type="term" value="P:division septum assembly"/>
    <property type="evidence" value="ECO:0007669"/>
    <property type="project" value="UniProtKB-KW"/>
</dbReference>
<dbReference type="CDD" id="cd01876">
    <property type="entry name" value="YihA_EngB"/>
    <property type="match status" value="1"/>
</dbReference>
<dbReference type="FunFam" id="3.40.50.300:FF:000098">
    <property type="entry name" value="Probable GTP-binding protein EngB"/>
    <property type="match status" value="1"/>
</dbReference>
<dbReference type="Gene3D" id="3.40.50.300">
    <property type="entry name" value="P-loop containing nucleotide triphosphate hydrolases"/>
    <property type="match status" value="1"/>
</dbReference>
<dbReference type="HAMAP" id="MF_00321">
    <property type="entry name" value="GTPase_EngB"/>
    <property type="match status" value="1"/>
</dbReference>
<dbReference type="InterPro" id="IPR030393">
    <property type="entry name" value="G_ENGB_dom"/>
</dbReference>
<dbReference type="InterPro" id="IPR006073">
    <property type="entry name" value="GTP-bd"/>
</dbReference>
<dbReference type="InterPro" id="IPR019987">
    <property type="entry name" value="GTP-bd_ribosome_bio_YsxC"/>
</dbReference>
<dbReference type="InterPro" id="IPR027417">
    <property type="entry name" value="P-loop_NTPase"/>
</dbReference>
<dbReference type="NCBIfam" id="TIGR03598">
    <property type="entry name" value="GTPase_YsxC"/>
    <property type="match status" value="1"/>
</dbReference>
<dbReference type="PANTHER" id="PTHR11649:SF13">
    <property type="entry name" value="ENGB-TYPE G DOMAIN-CONTAINING PROTEIN"/>
    <property type="match status" value="1"/>
</dbReference>
<dbReference type="PANTHER" id="PTHR11649">
    <property type="entry name" value="MSS1/TRME-RELATED GTP-BINDING PROTEIN"/>
    <property type="match status" value="1"/>
</dbReference>
<dbReference type="Pfam" id="PF01926">
    <property type="entry name" value="MMR_HSR1"/>
    <property type="match status" value="1"/>
</dbReference>
<dbReference type="SUPFAM" id="SSF52540">
    <property type="entry name" value="P-loop containing nucleoside triphosphate hydrolases"/>
    <property type="match status" value="1"/>
</dbReference>
<dbReference type="PROSITE" id="PS51706">
    <property type="entry name" value="G_ENGB"/>
    <property type="match status" value="1"/>
</dbReference>